<organism>
    <name type="scientific">Salmonella paratyphi C (strain RKS4594)</name>
    <dbReference type="NCBI Taxonomy" id="476213"/>
    <lineage>
        <taxon>Bacteria</taxon>
        <taxon>Pseudomonadati</taxon>
        <taxon>Pseudomonadota</taxon>
        <taxon>Gammaproteobacteria</taxon>
        <taxon>Enterobacterales</taxon>
        <taxon>Enterobacteriaceae</taxon>
        <taxon>Salmonella</taxon>
    </lineage>
</organism>
<sequence length="600" mass="68851">MVNNMTDLTAQDAAWSTRDHLDDPVIGELRNRFGPDAFTVQATRTGIPVVWVKREQLLEVGDFLKKLPKPYVMLFDLHGMDERLRTHRDGLPAADFSVFYHLISIERNRDIMLKVALSENDLRVPTFTKLFPNANWYERETWEMFGIDIEGHPHLTRIMMPQTWEGHPLRKDYPARATEFDPFELTKAKQDLEMEALTFKPEDWGMKRGTDNEDFMFLNLGPNHPSAHGAFRIILQLDGEEIVDCVPDIGYHHRGAEKMGERQSWHSYIPYTDRIEYLGGCVNEMPYVLAVEKLAGITVSDRVNVIRVMLSELFRINSHLLYISTFIQDVGAMTPVFFAFTDRQKIYDLVEAITGFRMHPAWFRIGGVAHDLPRGWDRLLREFLEWMPKRLDSYEKAALRNTILKGRSQGVAAYGAKEALEWGTTGAGLRATGIDFDVRKWRPYSGYENFDFEVPVGGGVSDCYTRVMLKVEELRQSLRILQQCLDNMPEGPFKADHPLTTPPPKERTLQHIETLITHFLQVSWGPVMPAQESFQMVEATKGINSYYLTSDGSTMSYRTRVRTPSFAHLQQIPSAIRGSLVSDLIVYLGSIDFVMSDVDR</sequence>
<keyword id="KW-0997">Cell inner membrane</keyword>
<keyword id="KW-1003">Cell membrane</keyword>
<keyword id="KW-0472">Membrane</keyword>
<keyword id="KW-0511">Multifunctional enzyme</keyword>
<keyword id="KW-0520">NAD</keyword>
<keyword id="KW-0874">Quinone</keyword>
<keyword id="KW-1278">Translocase</keyword>
<keyword id="KW-0813">Transport</keyword>
<keyword id="KW-0830">Ubiquinone</keyword>
<dbReference type="EC" id="7.1.1.-" evidence="1"/>
<dbReference type="EMBL" id="CP000857">
    <property type="protein sequence ID" value="ACN45545.1"/>
    <property type="molecule type" value="Genomic_DNA"/>
</dbReference>
<dbReference type="RefSeq" id="WP_000247856.1">
    <property type="nucleotide sequence ID" value="NC_012125.1"/>
</dbReference>
<dbReference type="SMR" id="C0Q041"/>
<dbReference type="KEGG" id="sei:SPC_1383"/>
<dbReference type="HOGENOM" id="CLU_015134_3_2_6"/>
<dbReference type="Proteomes" id="UP000001599">
    <property type="component" value="Chromosome"/>
</dbReference>
<dbReference type="GO" id="GO:0030964">
    <property type="term" value="C:NADH dehydrogenase complex"/>
    <property type="evidence" value="ECO:0007669"/>
    <property type="project" value="InterPro"/>
</dbReference>
<dbReference type="GO" id="GO:0005886">
    <property type="term" value="C:plasma membrane"/>
    <property type="evidence" value="ECO:0007669"/>
    <property type="project" value="UniProtKB-SubCell"/>
</dbReference>
<dbReference type="GO" id="GO:0051287">
    <property type="term" value="F:NAD binding"/>
    <property type="evidence" value="ECO:0007669"/>
    <property type="project" value="InterPro"/>
</dbReference>
<dbReference type="GO" id="GO:0008137">
    <property type="term" value="F:NADH dehydrogenase (ubiquinone) activity"/>
    <property type="evidence" value="ECO:0007669"/>
    <property type="project" value="InterPro"/>
</dbReference>
<dbReference type="GO" id="GO:0050136">
    <property type="term" value="F:NADH:ubiquinone reductase (non-electrogenic) activity"/>
    <property type="evidence" value="ECO:0007669"/>
    <property type="project" value="UniProtKB-UniRule"/>
</dbReference>
<dbReference type="GO" id="GO:0048038">
    <property type="term" value="F:quinone binding"/>
    <property type="evidence" value="ECO:0007669"/>
    <property type="project" value="UniProtKB-KW"/>
</dbReference>
<dbReference type="FunFam" id="1.10.645.10:FF:000001">
    <property type="entry name" value="NADH-quinone oxidoreductase subunit C/D"/>
    <property type="match status" value="1"/>
</dbReference>
<dbReference type="FunFam" id="3.30.460.80:FF:000001">
    <property type="entry name" value="NADH-quinone oxidoreductase subunit C/D"/>
    <property type="match status" value="1"/>
</dbReference>
<dbReference type="Gene3D" id="1.10.645.10">
    <property type="entry name" value="Cytochrome-c3 Hydrogenase, chain B"/>
    <property type="match status" value="1"/>
</dbReference>
<dbReference type="Gene3D" id="3.30.460.80">
    <property type="entry name" value="NADH:ubiquinone oxidoreductase, 30kDa subunit"/>
    <property type="match status" value="1"/>
</dbReference>
<dbReference type="HAMAP" id="MF_01359">
    <property type="entry name" value="NDH1_NuoCD_1"/>
    <property type="match status" value="1"/>
</dbReference>
<dbReference type="HAMAP" id="MF_01358">
    <property type="entry name" value="NDH1_NuoD"/>
    <property type="match status" value="1"/>
</dbReference>
<dbReference type="InterPro" id="IPR010218">
    <property type="entry name" value="NADH_DH_suC"/>
</dbReference>
<dbReference type="InterPro" id="IPR023062">
    <property type="entry name" value="NADH_DH_suCD"/>
</dbReference>
<dbReference type="InterPro" id="IPR001135">
    <property type="entry name" value="NADH_Q_OxRdtase_suD"/>
</dbReference>
<dbReference type="InterPro" id="IPR037232">
    <property type="entry name" value="NADH_quin_OxRdtase_su_C/D-like"/>
</dbReference>
<dbReference type="InterPro" id="IPR001268">
    <property type="entry name" value="NADH_UbQ_OxRdtase_30kDa_su"/>
</dbReference>
<dbReference type="InterPro" id="IPR014029">
    <property type="entry name" value="NADH_UbQ_OxRdtase_49kDa_CS"/>
</dbReference>
<dbReference type="InterPro" id="IPR022885">
    <property type="entry name" value="NDH1_su_D/H"/>
</dbReference>
<dbReference type="InterPro" id="IPR029014">
    <property type="entry name" value="NiFe-Hase_large"/>
</dbReference>
<dbReference type="NCBIfam" id="TIGR01961">
    <property type="entry name" value="NuoC_fam"/>
    <property type="match status" value="1"/>
</dbReference>
<dbReference type="NCBIfam" id="TIGR01962">
    <property type="entry name" value="NuoD"/>
    <property type="match status" value="1"/>
</dbReference>
<dbReference type="NCBIfam" id="NF004739">
    <property type="entry name" value="PRK06075.1"/>
    <property type="match status" value="1"/>
</dbReference>
<dbReference type="NCBIfam" id="NF008728">
    <property type="entry name" value="PRK11742.1"/>
    <property type="match status" value="1"/>
</dbReference>
<dbReference type="PANTHER" id="PTHR11993:SF45">
    <property type="entry name" value="NADH-QUINONE OXIDOREDUCTASE SUBUNIT C_D"/>
    <property type="match status" value="1"/>
</dbReference>
<dbReference type="PANTHER" id="PTHR11993">
    <property type="entry name" value="NADH-UBIQUINONE OXIDOREDUCTASE 49 KDA SUBUNIT"/>
    <property type="match status" value="1"/>
</dbReference>
<dbReference type="Pfam" id="PF00329">
    <property type="entry name" value="Complex1_30kDa"/>
    <property type="match status" value="1"/>
</dbReference>
<dbReference type="Pfam" id="PF00346">
    <property type="entry name" value="Complex1_49kDa"/>
    <property type="match status" value="1"/>
</dbReference>
<dbReference type="SUPFAM" id="SSF56762">
    <property type="entry name" value="HydB/Nqo4-like"/>
    <property type="match status" value="1"/>
</dbReference>
<dbReference type="SUPFAM" id="SSF143243">
    <property type="entry name" value="Nqo5-like"/>
    <property type="match status" value="1"/>
</dbReference>
<dbReference type="PROSITE" id="PS00535">
    <property type="entry name" value="COMPLEX1_49K"/>
    <property type="match status" value="1"/>
</dbReference>
<name>NUOCD_SALPC</name>
<evidence type="ECO:0000255" key="1">
    <source>
        <dbReference type="HAMAP-Rule" id="MF_01359"/>
    </source>
</evidence>
<reference key="1">
    <citation type="journal article" date="2009" name="PLoS ONE">
        <title>Salmonella paratyphi C: genetic divergence from Salmonella choleraesuis and pathogenic convergence with Salmonella typhi.</title>
        <authorList>
            <person name="Liu W.-Q."/>
            <person name="Feng Y."/>
            <person name="Wang Y."/>
            <person name="Zou Q.-H."/>
            <person name="Chen F."/>
            <person name="Guo J.-T."/>
            <person name="Peng Y.-H."/>
            <person name="Jin Y."/>
            <person name="Li Y.-G."/>
            <person name="Hu S.-N."/>
            <person name="Johnston R.N."/>
            <person name="Liu G.-R."/>
            <person name="Liu S.-L."/>
        </authorList>
    </citation>
    <scope>NUCLEOTIDE SEQUENCE [LARGE SCALE GENOMIC DNA]</scope>
    <source>
        <strain>RKS4594</strain>
    </source>
</reference>
<feature type="chain" id="PRO_1000166683" description="NADH-quinone oxidoreductase subunit C/D">
    <location>
        <begin position="1"/>
        <end position="600"/>
    </location>
</feature>
<feature type="region of interest" description="NADH dehydrogenase I subunit C" evidence="1">
    <location>
        <begin position="1"/>
        <end position="190"/>
    </location>
</feature>
<feature type="region of interest" description="NADH dehydrogenase I subunit D" evidence="1">
    <location>
        <begin position="214"/>
        <end position="600"/>
    </location>
</feature>
<protein>
    <recommendedName>
        <fullName evidence="1">NADH-quinone oxidoreductase subunit C/D</fullName>
        <ecNumber evidence="1">7.1.1.-</ecNumber>
    </recommendedName>
    <alternativeName>
        <fullName evidence="1">NADH dehydrogenase I subunit C/D</fullName>
    </alternativeName>
    <alternativeName>
        <fullName evidence="1">NDH-1 subunit C/D</fullName>
    </alternativeName>
</protein>
<proteinExistence type="inferred from homology"/>
<accession>C0Q041</accession>
<gene>
    <name evidence="1" type="primary">nuoC</name>
    <name evidence="1" type="synonym">nuoCD</name>
    <name evidence="1" type="synonym">nuoD</name>
    <name type="ordered locus">SPC_1383</name>
</gene>
<comment type="function">
    <text evidence="1">NDH-1 shuttles electrons from NADH, via FMN and iron-sulfur (Fe-S) centers, to quinones in the respiratory chain. The immediate electron acceptor for the enzyme in this species is believed to be ubiquinone. Couples the redox reaction to proton translocation (for every two electrons transferred, four hydrogen ions are translocated across the cytoplasmic membrane), and thus conserves the redox energy in a proton gradient.</text>
</comment>
<comment type="catalytic activity">
    <reaction evidence="1">
        <text>a quinone + NADH + 5 H(+)(in) = a quinol + NAD(+) + 4 H(+)(out)</text>
        <dbReference type="Rhea" id="RHEA:57888"/>
        <dbReference type="ChEBI" id="CHEBI:15378"/>
        <dbReference type="ChEBI" id="CHEBI:24646"/>
        <dbReference type="ChEBI" id="CHEBI:57540"/>
        <dbReference type="ChEBI" id="CHEBI:57945"/>
        <dbReference type="ChEBI" id="CHEBI:132124"/>
    </reaction>
</comment>
<comment type="subunit">
    <text evidence="1">NDH-1 is composed of 13 different subunits. Subunits NuoB, CD, E, F, and G constitute the peripheral sector of the complex.</text>
</comment>
<comment type="subcellular location">
    <subcellularLocation>
        <location evidence="1">Cell inner membrane</location>
        <topology evidence="1">Peripheral membrane protein</topology>
        <orientation evidence="1">Cytoplasmic side</orientation>
    </subcellularLocation>
</comment>
<comment type="similarity">
    <text evidence="1">In the N-terminal section; belongs to the complex I 30 kDa subunit family.</text>
</comment>
<comment type="similarity">
    <text evidence="1">In the C-terminal section; belongs to the complex I 49 kDa subunit family.</text>
</comment>